<reference key="1">
    <citation type="submission" date="2006-01" db="EMBL/GenBank/DDBJ databases">
        <title>Complete sequence of Novosphingobium aromaticivorans DSM 12444.</title>
        <authorList>
            <consortium name="US DOE Joint Genome Institute"/>
            <person name="Copeland A."/>
            <person name="Lucas S."/>
            <person name="Lapidus A."/>
            <person name="Barry K."/>
            <person name="Detter J.C."/>
            <person name="Glavina T."/>
            <person name="Hammon N."/>
            <person name="Israni S."/>
            <person name="Pitluck S."/>
            <person name="Chain P."/>
            <person name="Malfatti S."/>
            <person name="Shin M."/>
            <person name="Vergez L."/>
            <person name="Schmutz J."/>
            <person name="Larimer F."/>
            <person name="Land M."/>
            <person name="Kyrpides N."/>
            <person name="Ivanova N."/>
            <person name="Fredrickson J."/>
            <person name="Balkwill D."/>
            <person name="Romine M.F."/>
            <person name="Richardson P."/>
        </authorList>
    </citation>
    <scope>NUCLEOTIDE SEQUENCE [LARGE SCALE GENOMIC DNA]</scope>
    <source>
        <strain>ATCC 700278 / DSM 12444 / CCUG 56034 / CIP 105152 / NBRC 16084 / F199</strain>
    </source>
</reference>
<comment type="function">
    <text evidence="1">Catalyzes the reversible interconversion of serine and glycine with tetrahydrofolate (THF) serving as the one-carbon carrier. This reaction serves as the major source of one-carbon groups required for the biosynthesis of purines, thymidylate, methionine, and other important biomolecules. Also exhibits THF-independent aldolase activity toward beta-hydroxyamino acids, producing glycine and aldehydes, via a retro-aldol mechanism.</text>
</comment>
<comment type="catalytic activity">
    <reaction evidence="1">
        <text>(6R)-5,10-methylene-5,6,7,8-tetrahydrofolate + glycine + H2O = (6S)-5,6,7,8-tetrahydrofolate + L-serine</text>
        <dbReference type="Rhea" id="RHEA:15481"/>
        <dbReference type="ChEBI" id="CHEBI:15377"/>
        <dbReference type="ChEBI" id="CHEBI:15636"/>
        <dbReference type="ChEBI" id="CHEBI:33384"/>
        <dbReference type="ChEBI" id="CHEBI:57305"/>
        <dbReference type="ChEBI" id="CHEBI:57453"/>
        <dbReference type="EC" id="2.1.2.1"/>
    </reaction>
</comment>
<comment type="cofactor">
    <cofactor evidence="1">
        <name>pyridoxal 5'-phosphate</name>
        <dbReference type="ChEBI" id="CHEBI:597326"/>
    </cofactor>
</comment>
<comment type="pathway">
    <text evidence="1">One-carbon metabolism; tetrahydrofolate interconversion.</text>
</comment>
<comment type="pathway">
    <text evidence="1">Amino-acid biosynthesis; glycine biosynthesis; glycine from L-serine: step 1/1.</text>
</comment>
<comment type="subunit">
    <text evidence="1">Homodimer.</text>
</comment>
<comment type="subcellular location">
    <subcellularLocation>
        <location evidence="1">Cytoplasm</location>
    </subcellularLocation>
</comment>
<comment type="similarity">
    <text evidence="1">Belongs to the SHMT family.</text>
</comment>
<dbReference type="EC" id="2.1.2.1" evidence="1"/>
<dbReference type="EMBL" id="CP000248">
    <property type="protein sequence ID" value="ABD26677.1"/>
    <property type="molecule type" value="Genomic_DNA"/>
</dbReference>
<dbReference type="RefSeq" id="WP_011445883.1">
    <property type="nucleotide sequence ID" value="NC_007794.1"/>
</dbReference>
<dbReference type="SMR" id="Q2G646"/>
<dbReference type="STRING" id="279238.Saro_2240"/>
<dbReference type="KEGG" id="nar:Saro_2240"/>
<dbReference type="eggNOG" id="COG0112">
    <property type="taxonomic scope" value="Bacteria"/>
</dbReference>
<dbReference type="HOGENOM" id="CLU_022477_2_1_5"/>
<dbReference type="UniPathway" id="UPA00193"/>
<dbReference type="UniPathway" id="UPA00288">
    <property type="reaction ID" value="UER01023"/>
</dbReference>
<dbReference type="Proteomes" id="UP000009134">
    <property type="component" value="Chromosome"/>
</dbReference>
<dbReference type="GO" id="GO:0005829">
    <property type="term" value="C:cytosol"/>
    <property type="evidence" value="ECO:0007669"/>
    <property type="project" value="TreeGrafter"/>
</dbReference>
<dbReference type="GO" id="GO:0004372">
    <property type="term" value="F:glycine hydroxymethyltransferase activity"/>
    <property type="evidence" value="ECO:0007669"/>
    <property type="project" value="UniProtKB-UniRule"/>
</dbReference>
<dbReference type="GO" id="GO:0030170">
    <property type="term" value="F:pyridoxal phosphate binding"/>
    <property type="evidence" value="ECO:0007669"/>
    <property type="project" value="UniProtKB-UniRule"/>
</dbReference>
<dbReference type="GO" id="GO:0019264">
    <property type="term" value="P:glycine biosynthetic process from serine"/>
    <property type="evidence" value="ECO:0007669"/>
    <property type="project" value="UniProtKB-UniRule"/>
</dbReference>
<dbReference type="GO" id="GO:0035999">
    <property type="term" value="P:tetrahydrofolate interconversion"/>
    <property type="evidence" value="ECO:0007669"/>
    <property type="project" value="UniProtKB-UniRule"/>
</dbReference>
<dbReference type="CDD" id="cd00378">
    <property type="entry name" value="SHMT"/>
    <property type="match status" value="1"/>
</dbReference>
<dbReference type="FunFam" id="3.40.640.10:FF:000001">
    <property type="entry name" value="Serine hydroxymethyltransferase"/>
    <property type="match status" value="1"/>
</dbReference>
<dbReference type="FunFam" id="3.90.1150.10:FF:000003">
    <property type="entry name" value="Serine hydroxymethyltransferase"/>
    <property type="match status" value="1"/>
</dbReference>
<dbReference type="Gene3D" id="3.90.1150.10">
    <property type="entry name" value="Aspartate Aminotransferase, domain 1"/>
    <property type="match status" value="1"/>
</dbReference>
<dbReference type="Gene3D" id="3.40.640.10">
    <property type="entry name" value="Type I PLP-dependent aspartate aminotransferase-like (Major domain)"/>
    <property type="match status" value="1"/>
</dbReference>
<dbReference type="HAMAP" id="MF_00051">
    <property type="entry name" value="SHMT"/>
    <property type="match status" value="1"/>
</dbReference>
<dbReference type="InterPro" id="IPR015424">
    <property type="entry name" value="PyrdxlP-dep_Trfase"/>
</dbReference>
<dbReference type="InterPro" id="IPR015421">
    <property type="entry name" value="PyrdxlP-dep_Trfase_major"/>
</dbReference>
<dbReference type="InterPro" id="IPR015422">
    <property type="entry name" value="PyrdxlP-dep_Trfase_small"/>
</dbReference>
<dbReference type="InterPro" id="IPR001085">
    <property type="entry name" value="Ser_HO-MeTrfase"/>
</dbReference>
<dbReference type="InterPro" id="IPR049943">
    <property type="entry name" value="Ser_HO-MeTrfase-like"/>
</dbReference>
<dbReference type="InterPro" id="IPR019798">
    <property type="entry name" value="Ser_HO-MeTrfase_PLP_BS"/>
</dbReference>
<dbReference type="InterPro" id="IPR039429">
    <property type="entry name" value="SHMT-like_dom"/>
</dbReference>
<dbReference type="NCBIfam" id="NF000586">
    <property type="entry name" value="PRK00011.1"/>
    <property type="match status" value="1"/>
</dbReference>
<dbReference type="PANTHER" id="PTHR11680">
    <property type="entry name" value="SERINE HYDROXYMETHYLTRANSFERASE"/>
    <property type="match status" value="1"/>
</dbReference>
<dbReference type="PANTHER" id="PTHR11680:SF35">
    <property type="entry name" value="SERINE HYDROXYMETHYLTRANSFERASE 1"/>
    <property type="match status" value="1"/>
</dbReference>
<dbReference type="Pfam" id="PF00464">
    <property type="entry name" value="SHMT"/>
    <property type="match status" value="1"/>
</dbReference>
<dbReference type="PIRSF" id="PIRSF000412">
    <property type="entry name" value="SHMT"/>
    <property type="match status" value="1"/>
</dbReference>
<dbReference type="SUPFAM" id="SSF53383">
    <property type="entry name" value="PLP-dependent transferases"/>
    <property type="match status" value="1"/>
</dbReference>
<dbReference type="PROSITE" id="PS00096">
    <property type="entry name" value="SHMT"/>
    <property type="match status" value="1"/>
</dbReference>
<protein>
    <recommendedName>
        <fullName evidence="1">Serine hydroxymethyltransferase</fullName>
        <shortName evidence="1">SHMT</shortName>
        <shortName evidence="1">Serine methylase</shortName>
        <ecNumber evidence="1">2.1.2.1</ecNumber>
    </recommendedName>
</protein>
<feature type="chain" id="PRO_0000234994" description="Serine hydroxymethyltransferase">
    <location>
        <begin position="1"/>
        <end position="436"/>
    </location>
</feature>
<feature type="binding site" evidence="1">
    <location>
        <position position="133"/>
    </location>
    <ligand>
        <name>(6S)-5,6,7,8-tetrahydrofolate</name>
        <dbReference type="ChEBI" id="CHEBI:57453"/>
    </ligand>
</feature>
<feature type="binding site" evidence="1">
    <location>
        <begin position="137"/>
        <end position="139"/>
    </location>
    <ligand>
        <name>(6S)-5,6,7,8-tetrahydrofolate</name>
        <dbReference type="ChEBI" id="CHEBI:57453"/>
    </ligand>
</feature>
<feature type="binding site" evidence="1">
    <location>
        <begin position="366"/>
        <end position="368"/>
    </location>
    <ligand>
        <name>(6S)-5,6,7,8-tetrahydrofolate</name>
        <dbReference type="ChEBI" id="CHEBI:57453"/>
    </ligand>
</feature>
<feature type="site" description="Plays an important role in substrate specificity" evidence="1">
    <location>
        <position position="241"/>
    </location>
</feature>
<feature type="modified residue" description="N6-(pyridoxal phosphate)lysine" evidence="1">
    <location>
        <position position="242"/>
    </location>
</feature>
<organism>
    <name type="scientific">Novosphingobium aromaticivorans (strain ATCC 700278 / DSM 12444 / CCUG 56034 / CIP 105152 / NBRC 16084 / F199)</name>
    <dbReference type="NCBI Taxonomy" id="279238"/>
    <lineage>
        <taxon>Bacteria</taxon>
        <taxon>Pseudomonadati</taxon>
        <taxon>Pseudomonadota</taxon>
        <taxon>Alphaproteobacteria</taxon>
        <taxon>Sphingomonadales</taxon>
        <taxon>Sphingomonadaceae</taxon>
        <taxon>Novosphingobium</taxon>
    </lineage>
</organism>
<accession>Q2G646</accession>
<sequence>MTTATAAPEIRKAGFFTEHLETADAEVFAAIRGELKRQQTKIELIASENITSLAVLEATGSVFTNKYAEGYPGKRYYGGCEYADVVENLAIERAKKLFGCNFANVQPNSGSQMNQAVFLALLQPGDSFMGLDLNSGGHLTHGSPVNMSGKWFKPIPYGVRADDHLIDMDEVARLARENKPKLIIAGGTAYSRVWDFKRFREIADEVGAWLLVDMSHFSGLVAGGAHPSPFPHAHVVTSTTHKSLRGPRSGIILTNDEDLAKKFNMAVFPGMQGGPLVHVIAAKAVAFGEALRPEFKAYAAQIVANARALAEAVKDAGLSVVSGGTDNHLMLVDLSAKDVTGKAAEKGLDRAWLTCNKNGVPFDKRSPFVTSGIRLGTPAGTTRGFREEEFRKIGALIGEVVDGLARNGEEGDGQVEQRVRDRVAELCAQFPIYPEL</sequence>
<proteinExistence type="inferred from homology"/>
<keyword id="KW-0028">Amino-acid biosynthesis</keyword>
<keyword id="KW-0963">Cytoplasm</keyword>
<keyword id="KW-0554">One-carbon metabolism</keyword>
<keyword id="KW-0663">Pyridoxal phosphate</keyword>
<keyword id="KW-1185">Reference proteome</keyword>
<keyword id="KW-0808">Transferase</keyword>
<evidence type="ECO:0000255" key="1">
    <source>
        <dbReference type="HAMAP-Rule" id="MF_00051"/>
    </source>
</evidence>
<name>GLYA_NOVAD</name>
<gene>
    <name evidence="1" type="primary">glyA</name>
    <name type="ordered locus">Saro_2240</name>
</gene>